<comment type="function">
    <text evidence="1">This protein is one of the two subunits of integration host factor, a specific DNA-binding protein that functions in genetic recombination as well as in transcriptional and translational control.</text>
</comment>
<comment type="subunit">
    <text evidence="1">Heterodimer of an alpha and a beta chain.</text>
</comment>
<comment type="similarity">
    <text evidence="1">Belongs to the bacterial histone-like protein family.</text>
</comment>
<dbReference type="EMBL" id="CP000453">
    <property type="protein sequence ID" value="ABI56116.1"/>
    <property type="molecule type" value="Genomic_DNA"/>
</dbReference>
<dbReference type="RefSeq" id="WP_011628511.1">
    <property type="nucleotide sequence ID" value="NC_008340.1"/>
</dbReference>
<dbReference type="SMR" id="Q0AAM1"/>
<dbReference type="KEGG" id="aeh:Mlg_0762"/>
<dbReference type="eggNOG" id="COG0776">
    <property type="taxonomic scope" value="Bacteria"/>
</dbReference>
<dbReference type="HOGENOM" id="CLU_105066_1_3_6"/>
<dbReference type="OrthoDB" id="9797747at2"/>
<dbReference type="Proteomes" id="UP000001962">
    <property type="component" value="Chromosome"/>
</dbReference>
<dbReference type="GO" id="GO:0005829">
    <property type="term" value="C:cytosol"/>
    <property type="evidence" value="ECO:0007669"/>
    <property type="project" value="TreeGrafter"/>
</dbReference>
<dbReference type="GO" id="GO:0003677">
    <property type="term" value="F:DNA binding"/>
    <property type="evidence" value="ECO:0007669"/>
    <property type="project" value="UniProtKB-UniRule"/>
</dbReference>
<dbReference type="GO" id="GO:0030527">
    <property type="term" value="F:structural constituent of chromatin"/>
    <property type="evidence" value="ECO:0007669"/>
    <property type="project" value="InterPro"/>
</dbReference>
<dbReference type="GO" id="GO:0006310">
    <property type="term" value="P:DNA recombination"/>
    <property type="evidence" value="ECO:0007669"/>
    <property type="project" value="UniProtKB-UniRule"/>
</dbReference>
<dbReference type="GO" id="GO:0009893">
    <property type="term" value="P:positive regulation of metabolic process"/>
    <property type="evidence" value="ECO:0007669"/>
    <property type="project" value="UniProtKB-ARBA"/>
</dbReference>
<dbReference type="GO" id="GO:0006355">
    <property type="term" value="P:regulation of DNA-templated transcription"/>
    <property type="evidence" value="ECO:0007669"/>
    <property type="project" value="UniProtKB-UniRule"/>
</dbReference>
<dbReference type="GO" id="GO:0006417">
    <property type="term" value="P:regulation of translation"/>
    <property type="evidence" value="ECO:0007669"/>
    <property type="project" value="UniProtKB-UniRule"/>
</dbReference>
<dbReference type="CDD" id="cd13835">
    <property type="entry name" value="IHF_A"/>
    <property type="match status" value="1"/>
</dbReference>
<dbReference type="FunFam" id="4.10.520.10:FF:000002">
    <property type="entry name" value="Integration host factor subunit alpha"/>
    <property type="match status" value="1"/>
</dbReference>
<dbReference type="Gene3D" id="4.10.520.10">
    <property type="entry name" value="IHF-like DNA-binding proteins"/>
    <property type="match status" value="1"/>
</dbReference>
<dbReference type="HAMAP" id="MF_00380">
    <property type="entry name" value="IHF_alpha"/>
    <property type="match status" value="1"/>
</dbReference>
<dbReference type="InterPro" id="IPR000119">
    <property type="entry name" value="Hist_DNA-bd"/>
</dbReference>
<dbReference type="InterPro" id="IPR020816">
    <property type="entry name" value="Histone-like_DNA-bd_CS"/>
</dbReference>
<dbReference type="InterPro" id="IPR010992">
    <property type="entry name" value="IHF-like_DNA-bd_dom_sf"/>
</dbReference>
<dbReference type="InterPro" id="IPR005684">
    <property type="entry name" value="IHF_alpha"/>
</dbReference>
<dbReference type="NCBIfam" id="TIGR00987">
    <property type="entry name" value="himA"/>
    <property type="match status" value="1"/>
</dbReference>
<dbReference type="NCBIfam" id="NF001401">
    <property type="entry name" value="PRK00285.1"/>
    <property type="match status" value="1"/>
</dbReference>
<dbReference type="PANTHER" id="PTHR33175">
    <property type="entry name" value="DNA-BINDING PROTEIN HU"/>
    <property type="match status" value="1"/>
</dbReference>
<dbReference type="PANTHER" id="PTHR33175:SF2">
    <property type="entry name" value="INTEGRATION HOST FACTOR SUBUNIT ALPHA"/>
    <property type="match status" value="1"/>
</dbReference>
<dbReference type="Pfam" id="PF00216">
    <property type="entry name" value="Bac_DNA_binding"/>
    <property type="match status" value="1"/>
</dbReference>
<dbReference type="PRINTS" id="PR01727">
    <property type="entry name" value="DNABINDINGHU"/>
</dbReference>
<dbReference type="SMART" id="SM00411">
    <property type="entry name" value="BHL"/>
    <property type="match status" value="1"/>
</dbReference>
<dbReference type="SUPFAM" id="SSF47729">
    <property type="entry name" value="IHF-like DNA-binding proteins"/>
    <property type="match status" value="1"/>
</dbReference>
<dbReference type="PROSITE" id="PS00045">
    <property type="entry name" value="HISTONE_LIKE"/>
    <property type="match status" value="1"/>
</dbReference>
<accession>Q0AAM1</accession>
<reference key="1">
    <citation type="submission" date="2006-08" db="EMBL/GenBank/DDBJ databases">
        <title>Complete sequence of Alkalilimnicola ehrilichei MLHE-1.</title>
        <authorList>
            <person name="Copeland A."/>
            <person name="Lucas S."/>
            <person name="Lapidus A."/>
            <person name="Barry K."/>
            <person name="Detter J.C."/>
            <person name="Glavina del Rio T."/>
            <person name="Hammon N."/>
            <person name="Israni S."/>
            <person name="Dalin E."/>
            <person name="Tice H."/>
            <person name="Pitluck S."/>
            <person name="Sims D."/>
            <person name="Brettin T."/>
            <person name="Bruce D."/>
            <person name="Han C."/>
            <person name="Tapia R."/>
            <person name="Gilna P."/>
            <person name="Schmutz J."/>
            <person name="Larimer F."/>
            <person name="Land M."/>
            <person name="Hauser L."/>
            <person name="Kyrpides N."/>
            <person name="Mikhailova N."/>
            <person name="Oremland R.S."/>
            <person name="Hoeft S.E."/>
            <person name="Switzer-Blum J."/>
            <person name="Kulp T."/>
            <person name="King G."/>
            <person name="Tabita R."/>
            <person name="Witte B."/>
            <person name="Santini J.M."/>
            <person name="Basu P."/>
            <person name="Hollibaugh J.T."/>
            <person name="Xie G."/>
            <person name="Stolz J.F."/>
            <person name="Richardson P."/>
        </authorList>
    </citation>
    <scope>NUCLEOTIDE SEQUENCE [LARGE SCALE GENOMIC DNA]</scope>
    <source>
        <strain>ATCC BAA-1101 / DSM 17681 / MLHE-1</strain>
    </source>
</reference>
<gene>
    <name evidence="1" type="primary">ihfA</name>
    <name evidence="1" type="synonym">himA</name>
    <name type="ordered locus">Mlg_0762</name>
</gene>
<protein>
    <recommendedName>
        <fullName evidence="1">Integration host factor subunit alpha</fullName>
        <shortName evidence="1">IHF-alpha</shortName>
    </recommendedName>
</protein>
<name>IHFA_ALKEH</name>
<keyword id="KW-0233">DNA recombination</keyword>
<keyword id="KW-0238">DNA-binding</keyword>
<keyword id="KW-1185">Reference proteome</keyword>
<keyword id="KW-0804">Transcription</keyword>
<keyword id="KW-0805">Transcription regulation</keyword>
<keyword id="KW-0810">Translation regulation</keyword>
<organism>
    <name type="scientific">Alkalilimnicola ehrlichii (strain ATCC BAA-1101 / DSM 17681 / MLHE-1)</name>
    <dbReference type="NCBI Taxonomy" id="187272"/>
    <lineage>
        <taxon>Bacteria</taxon>
        <taxon>Pseudomonadati</taxon>
        <taxon>Pseudomonadota</taxon>
        <taxon>Gammaproteobacteria</taxon>
        <taxon>Chromatiales</taxon>
        <taxon>Ectothiorhodospiraceae</taxon>
        <taxon>Alkalilimnicola</taxon>
    </lineage>
</organism>
<evidence type="ECO:0000255" key="1">
    <source>
        <dbReference type="HAMAP-Rule" id="MF_00380"/>
    </source>
</evidence>
<sequence length="101" mass="11423">MALTKADMAERLFEEVGLNKREAKELVESFFEEIRQALEDGVPVKLSGFGNFDLRDKNERPGRNPKTGEEIPISARRVVTFRPGQKLKSRVEAYAGNVKQS</sequence>
<feature type="chain" id="PRO_0000277710" description="Integration host factor subunit alpha">
    <location>
        <begin position="1"/>
        <end position="101"/>
    </location>
</feature>
<proteinExistence type="inferred from homology"/>